<evidence type="ECO:0000255" key="1">
    <source>
        <dbReference type="HAMAP-Rule" id="MF_01310"/>
    </source>
</evidence>
<evidence type="ECO:0000305" key="2"/>
<feature type="chain" id="PRO_0000364209" description="Small ribosomal subunit protein uS11c">
    <location>
        <begin position="1"/>
        <end position="143"/>
    </location>
</feature>
<sequence>MAKAVPKIGSRKRVRIGLRRNARFSLRKSARRITKGVIHVQASFNNTIITVTDPQGRVVFWSSAGTCGFKSSRKASPYAGQRTAVDAIRTVGLQRAEVMVKGAGSGRDAALRAIAKSGVRLSCIRDVTPMPHNGCRPPKKRRL</sequence>
<comment type="subunit">
    <text evidence="1">Part of the 30S ribosomal subunit.</text>
</comment>
<comment type="subcellular location">
    <subcellularLocation>
        <location>Plastid</location>
        <location>Chloroplast</location>
    </subcellularLocation>
</comment>
<comment type="similarity">
    <text evidence="1">Belongs to the universal ribosomal protein uS11 family.</text>
</comment>
<gene>
    <name evidence="1" type="primary">rps11</name>
</gene>
<keyword id="KW-0150">Chloroplast</keyword>
<keyword id="KW-0934">Plastid</keyword>
<keyword id="KW-1185">Reference proteome</keyword>
<keyword id="KW-0687">Ribonucleoprotein</keyword>
<keyword id="KW-0689">Ribosomal protein</keyword>
<keyword id="KW-0694">RNA-binding</keyword>
<keyword id="KW-0699">rRNA-binding</keyword>
<accession>B3TN82</accession>
<protein>
    <recommendedName>
        <fullName evidence="1">Small ribosomal subunit protein uS11c</fullName>
    </recommendedName>
    <alternativeName>
        <fullName evidence="2">30S ribosomal protein S11, chloroplastic</fullName>
    </alternativeName>
</protein>
<organism>
    <name type="scientific">Brachypodium distachyon</name>
    <name type="common">Purple false brome</name>
    <name type="synonym">Trachynia distachya</name>
    <dbReference type="NCBI Taxonomy" id="15368"/>
    <lineage>
        <taxon>Eukaryota</taxon>
        <taxon>Viridiplantae</taxon>
        <taxon>Streptophyta</taxon>
        <taxon>Embryophyta</taxon>
        <taxon>Tracheophyta</taxon>
        <taxon>Spermatophyta</taxon>
        <taxon>Magnoliopsida</taxon>
        <taxon>Liliopsida</taxon>
        <taxon>Poales</taxon>
        <taxon>Poaceae</taxon>
        <taxon>BOP clade</taxon>
        <taxon>Pooideae</taxon>
        <taxon>Stipodae</taxon>
        <taxon>Brachypodieae</taxon>
        <taxon>Brachypodium</taxon>
    </lineage>
</organism>
<name>RR11_BRADI</name>
<proteinExistence type="inferred from homology"/>
<geneLocation type="chloroplast"/>
<dbReference type="EMBL" id="EU325680">
    <property type="protein sequence ID" value="ACF08670.1"/>
    <property type="molecule type" value="Genomic_DNA"/>
</dbReference>
<dbReference type="RefSeq" id="YP_002000518.1">
    <property type="nucleotide sequence ID" value="NC_011032.1"/>
</dbReference>
<dbReference type="SMR" id="B3TN82"/>
<dbReference type="FunCoup" id="B3TN82">
    <property type="interactions" value="446"/>
</dbReference>
<dbReference type="STRING" id="15368.B3TN82"/>
<dbReference type="EnsemblPlants" id="KQK18195">
    <property type="protein sequence ID" value="KQK18195"/>
    <property type="gene ID" value="BRADI_1g05763v3"/>
</dbReference>
<dbReference type="GeneID" id="6439841"/>
<dbReference type="Gramene" id="KQK18195">
    <property type="protein sequence ID" value="KQK18195"/>
    <property type="gene ID" value="BRADI_1g05763v3"/>
</dbReference>
<dbReference type="KEGG" id="bdi:6439841"/>
<dbReference type="eggNOG" id="KOG0408">
    <property type="taxonomic scope" value="Eukaryota"/>
</dbReference>
<dbReference type="InParanoid" id="B3TN82"/>
<dbReference type="OrthoDB" id="535480at2759"/>
<dbReference type="Proteomes" id="UP000008810">
    <property type="component" value="Unplaced"/>
</dbReference>
<dbReference type="GO" id="GO:0009507">
    <property type="term" value="C:chloroplast"/>
    <property type="evidence" value="ECO:0007669"/>
    <property type="project" value="UniProtKB-SubCell"/>
</dbReference>
<dbReference type="GO" id="GO:1990904">
    <property type="term" value="C:ribonucleoprotein complex"/>
    <property type="evidence" value="ECO:0007669"/>
    <property type="project" value="UniProtKB-KW"/>
</dbReference>
<dbReference type="GO" id="GO:0005840">
    <property type="term" value="C:ribosome"/>
    <property type="evidence" value="ECO:0007669"/>
    <property type="project" value="UniProtKB-KW"/>
</dbReference>
<dbReference type="GO" id="GO:0019843">
    <property type="term" value="F:rRNA binding"/>
    <property type="evidence" value="ECO:0007669"/>
    <property type="project" value="UniProtKB-UniRule"/>
</dbReference>
<dbReference type="GO" id="GO:0003735">
    <property type="term" value="F:structural constituent of ribosome"/>
    <property type="evidence" value="ECO:0000318"/>
    <property type="project" value="GO_Central"/>
</dbReference>
<dbReference type="GO" id="GO:0006412">
    <property type="term" value="P:translation"/>
    <property type="evidence" value="ECO:0000318"/>
    <property type="project" value="GO_Central"/>
</dbReference>
<dbReference type="FunFam" id="3.30.420.80:FF:000003">
    <property type="entry name" value="30S ribosomal protein S11, chloroplastic"/>
    <property type="match status" value="1"/>
</dbReference>
<dbReference type="Gene3D" id="3.30.420.80">
    <property type="entry name" value="Ribosomal protein S11"/>
    <property type="match status" value="1"/>
</dbReference>
<dbReference type="HAMAP" id="MF_01310">
    <property type="entry name" value="Ribosomal_uS11"/>
    <property type="match status" value="1"/>
</dbReference>
<dbReference type="InterPro" id="IPR001971">
    <property type="entry name" value="Ribosomal_uS11"/>
</dbReference>
<dbReference type="InterPro" id="IPR018102">
    <property type="entry name" value="Ribosomal_uS11_CS"/>
</dbReference>
<dbReference type="InterPro" id="IPR036967">
    <property type="entry name" value="Ribosomal_uS11_sf"/>
</dbReference>
<dbReference type="NCBIfam" id="NF003698">
    <property type="entry name" value="PRK05309.1"/>
    <property type="match status" value="1"/>
</dbReference>
<dbReference type="PANTHER" id="PTHR11759">
    <property type="entry name" value="40S RIBOSOMAL PROTEIN S14/30S RIBOSOMAL PROTEIN S11"/>
    <property type="match status" value="1"/>
</dbReference>
<dbReference type="Pfam" id="PF00411">
    <property type="entry name" value="Ribosomal_S11"/>
    <property type="match status" value="1"/>
</dbReference>
<dbReference type="PIRSF" id="PIRSF002131">
    <property type="entry name" value="Ribosomal_S11"/>
    <property type="match status" value="1"/>
</dbReference>
<dbReference type="SUPFAM" id="SSF53137">
    <property type="entry name" value="Translational machinery components"/>
    <property type="match status" value="1"/>
</dbReference>
<dbReference type="PROSITE" id="PS00054">
    <property type="entry name" value="RIBOSOMAL_S11"/>
    <property type="match status" value="1"/>
</dbReference>
<reference key="1">
    <citation type="journal article" date="2008" name="BMC Res. Notes">
        <title>The complete chloroplast genome sequence of Brachypodium distachyon: sequence comparison and phylogenetic analysis of eight grass plastomes.</title>
        <authorList>
            <person name="Bortiri E."/>
            <person name="Coleman-Derr D."/>
            <person name="Lazo G.R."/>
            <person name="Anderson O.D."/>
            <person name="Gu Y.Q."/>
        </authorList>
    </citation>
    <scope>NUCLEOTIDE SEQUENCE [LARGE SCALE GENOMIC DNA]</scope>
    <source>
        <strain>cv. Bd21</strain>
    </source>
</reference>